<comment type="function">
    <text evidence="1">Catalyzes the hydrolytic deamination of adenosine and 2-deoxyadenosine. Plays an important role in purine metabolism and in adenosine homeostasis. Modulates signaling by extracellular adenosine, and so contributes indirectly to cellular signaling events. May act as a positive regulator of T-cell coactivation (By similarity).</text>
</comment>
<comment type="catalytic activity">
    <reaction evidence="2">
        <text>adenosine + H2O + H(+) = inosine + NH4(+)</text>
        <dbReference type="Rhea" id="RHEA:24408"/>
        <dbReference type="ChEBI" id="CHEBI:15377"/>
        <dbReference type="ChEBI" id="CHEBI:15378"/>
        <dbReference type="ChEBI" id="CHEBI:16335"/>
        <dbReference type="ChEBI" id="CHEBI:17596"/>
        <dbReference type="ChEBI" id="CHEBI:28938"/>
        <dbReference type="EC" id="3.5.4.4"/>
    </reaction>
    <physiologicalReaction direction="left-to-right" evidence="2">
        <dbReference type="Rhea" id="RHEA:24409"/>
    </physiologicalReaction>
</comment>
<comment type="catalytic activity">
    <reaction evidence="2">
        <text>2'-deoxyadenosine + H2O + H(+) = 2'-deoxyinosine + NH4(+)</text>
        <dbReference type="Rhea" id="RHEA:28190"/>
        <dbReference type="ChEBI" id="CHEBI:15377"/>
        <dbReference type="ChEBI" id="CHEBI:15378"/>
        <dbReference type="ChEBI" id="CHEBI:17256"/>
        <dbReference type="ChEBI" id="CHEBI:28938"/>
        <dbReference type="ChEBI" id="CHEBI:28997"/>
        <dbReference type="EC" id="3.5.4.4"/>
    </reaction>
    <physiologicalReaction direction="left-to-right" evidence="2">
        <dbReference type="Rhea" id="RHEA:28191"/>
    </physiologicalReaction>
</comment>
<comment type="cofactor">
    <cofactor evidence="3">
        <name>Zn(2+)</name>
        <dbReference type="ChEBI" id="CHEBI:29105"/>
    </cofactor>
    <text evidence="3">Binds 1 zinc ion per subunit.</text>
</comment>
<comment type="subcellular location">
    <subcellularLocation>
        <location evidence="2">Cell membrane</location>
        <topology evidence="1">Peripheral membrane protein</topology>
        <orientation evidence="1">Extracellular side</orientation>
    </subcellularLocation>
    <subcellularLocation>
        <location evidence="2">Cell junction</location>
    </subcellularLocation>
    <subcellularLocation>
        <location evidence="3">Cytoplasmic vesicle lumen</location>
    </subcellularLocation>
    <subcellularLocation>
        <location evidence="1">Cytoplasm</location>
    </subcellularLocation>
    <subcellularLocation>
        <location evidence="2">Lysosome</location>
    </subcellularLocation>
</comment>
<comment type="similarity">
    <text evidence="5">Belongs to the metallo-dependent hydrolases superfamily. Adenosine and AMP deaminases family.</text>
</comment>
<comment type="sequence caution" evidence="5">
    <conflict type="erroneous initiation">
        <sequence resource="EMBL-CDS" id="AAH76532"/>
    </conflict>
    <text>Extended N-terminus.</text>
</comment>
<feature type="chain" id="PRO_0000194356" description="Adenosine deaminase">
    <location>
        <begin position="1"/>
        <end position="359"/>
    </location>
</feature>
<feature type="active site" description="Proton donor" evidence="3">
    <location>
        <position position="216"/>
    </location>
</feature>
<feature type="binding site" evidence="4">
    <location>
        <position position="15"/>
    </location>
    <ligand>
        <name>Zn(2+)</name>
        <dbReference type="ChEBI" id="CHEBI:29105"/>
        <note>catalytic</note>
    </ligand>
</feature>
<feature type="binding site" evidence="4">
    <location>
        <position position="17"/>
    </location>
    <ligand>
        <name>substrate</name>
    </ligand>
</feature>
<feature type="binding site" evidence="4">
    <location>
        <position position="17"/>
    </location>
    <ligand>
        <name>Zn(2+)</name>
        <dbReference type="ChEBI" id="CHEBI:29105"/>
        <note>catalytic</note>
    </ligand>
</feature>
<feature type="binding site" evidence="4">
    <location>
        <position position="19"/>
    </location>
    <ligand>
        <name>substrate</name>
    </ligand>
</feature>
<feature type="binding site" evidence="4">
    <location>
        <position position="184"/>
    </location>
    <ligand>
        <name>substrate</name>
    </ligand>
</feature>
<feature type="binding site" evidence="4">
    <location>
        <position position="213"/>
    </location>
    <ligand>
        <name>Zn(2+)</name>
        <dbReference type="ChEBI" id="CHEBI:29105"/>
        <note>catalytic</note>
    </ligand>
</feature>
<feature type="binding site" evidence="4">
    <location>
        <position position="295"/>
    </location>
    <ligand>
        <name>Zn(2+)</name>
        <dbReference type="ChEBI" id="CHEBI:29105"/>
        <note>catalytic</note>
    </ligand>
</feature>
<feature type="binding site" evidence="4">
    <location>
        <position position="296"/>
    </location>
    <ligand>
        <name>substrate</name>
    </ligand>
</feature>
<feature type="site" description="Important for catalytic activity" evidence="3">
    <location>
        <position position="237"/>
    </location>
</feature>
<accession>Q6DG22</accession>
<protein>
    <recommendedName>
        <fullName>Adenosine deaminase</fullName>
        <ecNumber evidence="2">3.5.4.4</ecNumber>
    </recommendedName>
    <alternativeName>
        <fullName>Adenosine aminohydrolase</fullName>
    </alternativeName>
</protein>
<organism>
    <name type="scientific">Danio rerio</name>
    <name type="common">Zebrafish</name>
    <name type="synonym">Brachydanio rerio</name>
    <dbReference type="NCBI Taxonomy" id="7955"/>
    <lineage>
        <taxon>Eukaryota</taxon>
        <taxon>Metazoa</taxon>
        <taxon>Chordata</taxon>
        <taxon>Craniata</taxon>
        <taxon>Vertebrata</taxon>
        <taxon>Euteleostomi</taxon>
        <taxon>Actinopterygii</taxon>
        <taxon>Neopterygii</taxon>
        <taxon>Teleostei</taxon>
        <taxon>Ostariophysi</taxon>
        <taxon>Cypriniformes</taxon>
        <taxon>Danionidae</taxon>
        <taxon>Danioninae</taxon>
        <taxon>Danio</taxon>
    </lineage>
</organism>
<name>ADA_DANRE</name>
<keyword id="KW-0965">Cell junction</keyword>
<keyword id="KW-1003">Cell membrane</keyword>
<keyword id="KW-0963">Cytoplasm</keyword>
<keyword id="KW-0968">Cytoplasmic vesicle</keyword>
<keyword id="KW-0378">Hydrolase</keyword>
<keyword id="KW-0458">Lysosome</keyword>
<keyword id="KW-0472">Membrane</keyword>
<keyword id="KW-0479">Metal-binding</keyword>
<keyword id="KW-0546">Nucleotide metabolism</keyword>
<keyword id="KW-1185">Reference proteome</keyword>
<keyword id="KW-0862">Zinc</keyword>
<evidence type="ECO:0000250" key="1"/>
<evidence type="ECO:0000250" key="2">
    <source>
        <dbReference type="UniProtKB" id="P00813"/>
    </source>
</evidence>
<evidence type="ECO:0000250" key="3">
    <source>
        <dbReference type="UniProtKB" id="P03958"/>
    </source>
</evidence>
<evidence type="ECO:0000250" key="4">
    <source>
        <dbReference type="UniProtKB" id="P56658"/>
    </source>
</evidence>
<evidence type="ECO:0000305" key="5"/>
<sequence length="359" mass="40844">MNGKPAFDKPKVELHVHLDGAIRLKTVLDVAKRRGISLPVSMEEELKELCTVNEPATLTEFLGKFSHFMHVIAGDREAIKRIAYEFVETKAKEGVIYVEARYSPHFLANKGVEPLPWDQKPGDITPDDVVDLVNQGFKEGEQAFKTKARSILCCMRHMPNWSMEVVELCKKFHKDGVVAIDLAGDESMNCESYPGHKKAFEEAVRSNVHRTVHAGEVGPASVVREAVEVLKAERIGHGYHTLEDQNLYKQLLHQNMHFEMCPVSSRLTGACEPDFTKHPLITFKKDKANYSLNTDDPTIFNSTLNSDYEVVQKYMDFTEEEFKRLNINAAKSCFLPEKEKEKLLNQLYEAYGMRKSTSF</sequence>
<reference key="1">
    <citation type="submission" date="2004-07" db="EMBL/GenBank/DDBJ databases">
        <authorList>
            <consortium name="NIH - Zebrafish Gene Collection (ZGC) project"/>
        </authorList>
    </citation>
    <scope>NUCLEOTIDE SEQUENCE [LARGE SCALE MRNA]</scope>
</reference>
<dbReference type="EC" id="3.5.4.4" evidence="2"/>
<dbReference type="EMBL" id="BC076532">
    <property type="protein sequence ID" value="AAH76532.1"/>
    <property type="status" value="ALT_INIT"/>
    <property type="molecule type" value="mRNA"/>
</dbReference>
<dbReference type="RefSeq" id="NP_001002646.1">
    <property type="nucleotide sequence ID" value="NM_001002646.1"/>
</dbReference>
<dbReference type="SMR" id="Q6DG22"/>
<dbReference type="FunCoup" id="Q6DG22">
    <property type="interactions" value="466"/>
</dbReference>
<dbReference type="STRING" id="7955.ENSDARP00000005284"/>
<dbReference type="PaxDb" id="7955-ENSDARP00000005284"/>
<dbReference type="PeptideAtlas" id="Q6DG22"/>
<dbReference type="GeneID" id="436919"/>
<dbReference type="KEGG" id="dre:436919"/>
<dbReference type="AGR" id="ZFIN:ZDB-GENE-040718-393"/>
<dbReference type="CTD" id="100"/>
<dbReference type="ZFIN" id="ZDB-GENE-040718-393">
    <property type="gene designation" value="ada"/>
</dbReference>
<dbReference type="eggNOG" id="KOG1097">
    <property type="taxonomic scope" value="Eukaryota"/>
</dbReference>
<dbReference type="InParanoid" id="Q6DG22"/>
<dbReference type="OrthoDB" id="272271at2759"/>
<dbReference type="PhylomeDB" id="Q6DG22"/>
<dbReference type="Reactome" id="R-DRE-74217">
    <property type="pathway name" value="Purine salvage"/>
</dbReference>
<dbReference type="Reactome" id="R-DRE-9755088">
    <property type="pathway name" value="Ribavirin ADME"/>
</dbReference>
<dbReference type="PRO" id="PR:Q6DG22"/>
<dbReference type="Proteomes" id="UP000000437">
    <property type="component" value="Chromosome 23"/>
</dbReference>
<dbReference type="GO" id="GO:0070161">
    <property type="term" value="C:anchoring junction"/>
    <property type="evidence" value="ECO:0007669"/>
    <property type="project" value="UniProtKB-SubCell"/>
</dbReference>
<dbReference type="GO" id="GO:0060205">
    <property type="term" value="C:cytoplasmic vesicle lumen"/>
    <property type="evidence" value="ECO:0007669"/>
    <property type="project" value="UniProtKB-SubCell"/>
</dbReference>
<dbReference type="GO" id="GO:0005829">
    <property type="term" value="C:cytosol"/>
    <property type="evidence" value="ECO:0000318"/>
    <property type="project" value="GO_Central"/>
</dbReference>
<dbReference type="GO" id="GO:0009897">
    <property type="term" value="C:external side of plasma membrane"/>
    <property type="evidence" value="ECO:0000318"/>
    <property type="project" value="GO_Central"/>
</dbReference>
<dbReference type="GO" id="GO:0005764">
    <property type="term" value="C:lysosome"/>
    <property type="evidence" value="ECO:0007669"/>
    <property type="project" value="UniProtKB-SubCell"/>
</dbReference>
<dbReference type="GO" id="GO:0046936">
    <property type="term" value="F:2'-deoxyadenosine deaminase activity"/>
    <property type="evidence" value="ECO:0007669"/>
    <property type="project" value="RHEA"/>
</dbReference>
<dbReference type="GO" id="GO:0004000">
    <property type="term" value="F:adenosine deaminase activity"/>
    <property type="evidence" value="ECO:0000314"/>
    <property type="project" value="CACAO"/>
</dbReference>
<dbReference type="GO" id="GO:0008270">
    <property type="term" value="F:zinc ion binding"/>
    <property type="evidence" value="ECO:0000250"/>
    <property type="project" value="UniProtKB"/>
</dbReference>
<dbReference type="GO" id="GO:0006154">
    <property type="term" value="P:adenosine catabolic process"/>
    <property type="evidence" value="ECO:0000250"/>
    <property type="project" value="UniProtKB"/>
</dbReference>
<dbReference type="GO" id="GO:0043103">
    <property type="term" value="P:hypoxanthine salvage"/>
    <property type="evidence" value="ECO:0000318"/>
    <property type="project" value="GO_Central"/>
</dbReference>
<dbReference type="GO" id="GO:0046103">
    <property type="term" value="P:inosine biosynthetic process"/>
    <property type="evidence" value="ECO:0000250"/>
    <property type="project" value="UniProtKB"/>
</dbReference>
<dbReference type="GO" id="GO:0060169">
    <property type="term" value="P:negative regulation of adenosine receptor signaling pathway"/>
    <property type="evidence" value="ECO:0000318"/>
    <property type="project" value="GO_Central"/>
</dbReference>
<dbReference type="GO" id="GO:0009117">
    <property type="term" value="P:nucleotide metabolic process"/>
    <property type="evidence" value="ECO:0007669"/>
    <property type="project" value="UniProtKB-KW"/>
</dbReference>
<dbReference type="GO" id="GO:0009168">
    <property type="term" value="P:purine ribonucleoside monophosphate biosynthetic process"/>
    <property type="evidence" value="ECO:0007669"/>
    <property type="project" value="InterPro"/>
</dbReference>
<dbReference type="GO" id="GO:0042110">
    <property type="term" value="P:T cell activation"/>
    <property type="evidence" value="ECO:0000318"/>
    <property type="project" value="GO_Central"/>
</dbReference>
<dbReference type="CDD" id="cd01320">
    <property type="entry name" value="ADA"/>
    <property type="match status" value="1"/>
</dbReference>
<dbReference type="FunFam" id="3.20.20.140:FF:000038">
    <property type="entry name" value="Adenosine deaminase"/>
    <property type="match status" value="1"/>
</dbReference>
<dbReference type="Gene3D" id="3.20.20.140">
    <property type="entry name" value="Metal-dependent hydrolases"/>
    <property type="match status" value="1"/>
</dbReference>
<dbReference type="HAMAP" id="MF_00540">
    <property type="entry name" value="A_deaminase"/>
    <property type="match status" value="1"/>
</dbReference>
<dbReference type="InterPro" id="IPR006650">
    <property type="entry name" value="A/AMP_deam_AS"/>
</dbReference>
<dbReference type="InterPro" id="IPR028893">
    <property type="entry name" value="A_deaminase"/>
</dbReference>
<dbReference type="InterPro" id="IPR001365">
    <property type="entry name" value="A_deaminase_dom"/>
</dbReference>
<dbReference type="InterPro" id="IPR006330">
    <property type="entry name" value="Ado/ade_deaminase"/>
</dbReference>
<dbReference type="InterPro" id="IPR032466">
    <property type="entry name" value="Metal_Hydrolase"/>
</dbReference>
<dbReference type="NCBIfam" id="TIGR01430">
    <property type="entry name" value="aden_deam"/>
    <property type="match status" value="1"/>
</dbReference>
<dbReference type="PANTHER" id="PTHR11409">
    <property type="entry name" value="ADENOSINE DEAMINASE"/>
    <property type="match status" value="1"/>
</dbReference>
<dbReference type="PANTHER" id="PTHR11409:SF43">
    <property type="entry name" value="ADENOSINE DEAMINASE"/>
    <property type="match status" value="1"/>
</dbReference>
<dbReference type="Pfam" id="PF00962">
    <property type="entry name" value="A_deaminase"/>
    <property type="match status" value="1"/>
</dbReference>
<dbReference type="SUPFAM" id="SSF51556">
    <property type="entry name" value="Metallo-dependent hydrolases"/>
    <property type="match status" value="1"/>
</dbReference>
<dbReference type="PROSITE" id="PS00485">
    <property type="entry name" value="A_DEAMINASE"/>
    <property type="match status" value="1"/>
</dbReference>
<proteinExistence type="evidence at transcript level"/>
<gene>
    <name type="primary">ada</name>
</gene>